<organism>
    <name type="scientific">Saccharomyces cerevisiae (strain ATCC 204508 / S288c)</name>
    <name type="common">Baker's yeast</name>
    <dbReference type="NCBI Taxonomy" id="559292"/>
    <lineage>
        <taxon>Eukaryota</taxon>
        <taxon>Fungi</taxon>
        <taxon>Dikarya</taxon>
        <taxon>Ascomycota</taxon>
        <taxon>Saccharomycotina</taxon>
        <taxon>Saccharomycetes</taxon>
        <taxon>Saccharomycetales</taxon>
        <taxon>Saccharomycetaceae</taxon>
        <taxon>Saccharomyces</taxon>
    </lineage>
</organism>
<name>TMA20_YEAST</name>
<reference key="1">
    <citation type="journal article" date="1997" name="Nature">
        <title>The nucleotide sequence of Saccharomyces cerevisiae chromosome V.</title>
        <authorList>
            <person name="Dietrich F.S."/>
            <person name="Mulligan J.T."/>
            <person name="Hennessy K.M."/>
            <person name="Yelton M.A."/>
            <person name="Allen E."/>
            <person name="Araujo R."/>
            <person name="Aviles E."/>
            <person name="Berno A."/>
            <person name="Brennan T."/>
            <person name="Carpenter J."/>
            <person name="Chen E."/>
            <person name="Cherry J.M."/>
            <person name="Chung E."/>
            <person name="Duncan M."/>
            <person name="Guzman E."/>
            <person name="Hartzell G."/>
            <person name="Hunicke-Smith S."/>
            <person name="Hyman R.W."/>
            <person name="Kayser A."/>
            <person name="Komp C."/>
            <person name="Lashkari D."/>
            <person name="Lew H."/>
            <person name="Lin D."/>
            <person name="Mosedale D."/>
            <person name="Nakahara K."/>
            <person name="Namath A."/>
            <person name="Norgren R."/>
            <person name="Oefner P."/>
            <person name="Oh C."/>
            <person name="Petel F.X."/>
            <person name="Roberts D."/>
            <person name="Sehl P."/>
            <person name="Schramm S."/>
            <person name="Shogren T."/>
            <person name="Smith V."/>
            <person name="Taylor P."/>
            <person name="Wei Y."/>
            <person name="Botstein D."/>
            <person name="Davis R.W."/>
        </authorList>
    </citation>
    <scope>NUCLEOTIDE SEQUENCE [LARGE SCALE GENOMIC DNA]</scope>
    <source>
        <strain>ATCC 204508 / S288c</strain>
    </source>
</reference>
<reference key="2">
    <citation type="journal article" date="2014" name="G3 (Bethesda)">
        <title>The reference genome sequence of Saccharomyces cerevisiae: Then and now.</title>
        <authorList>
            <person name="Engel S.R."/>
            <person name="Dietrich F.S."/>
            <person name="Fisk D.G."/>
            <person name="Binkley G."/>
            <person name="Balakrishnan R."/>
            <person name="Costanzo M.C."/>
            <person name="Dwight S.S."/>
            <person name="Hitz B.C."/>
            <person name="Karra K."/>
            <person name="Nash R.S."/>
            <person name="Weng S."/>
            <person name="Wong E.D."/>
            <person name="Lloyd P."/>
            <person name="Skrzypek M.S."/>
            <person name="Miyasato S.R."/>
            <person name="Simison M."/>
            <person name="Cherry J.M."/>
        </authorList>
    </citation>
    <scope>GENOME REANNOTATION</scope>
    <source>
        <strain>ATCC 204508 / S288c</strain>
    </source>
</reference>
<reference key="3">
    <citation type="journal article" date="1999" name="J. Mol. Evol.">
        <title>Novel predicted RNA-binding domains associated with the translation machinery.</title>
        <authorList>
            <person name="Aravind L."/>
            <person name="Koonin E.V."/>
        </authorList>
    </citation>
    <scope>DOMAIN</scope>
</reference>
<reference key="4">
    <citation type="journal article" date="2003" name="Nature">
        <title>Global analysis of protein localization in budding yeast.</title>
        <authorList>
            <person name="Huh W.-K."/>
            <person name="Falvo J.V."/>
            <person name="Gerke L.C."/>
            <person name="Carroll A.S."/>
            <person name="Howson R.W."/>
            <person name="Weissman J.S."/>
            <person name="O'Shea E.K."/>
        </authorList>
    </citation>
    <scope>SUBCELLULAR LOCATION [LARGE SCALE ANALYSIS]</scope>
</reference>
<reference key="5">
    <citation type="journal article" date="2003" name="Nature">
        <title>Global analysis of protein expression in yeast.</title>
        <authorList>
            <person name="Ghaemmaghami S."/>
            <person name="Huh W.-K."/>
            <person name="Bower K."/>
            <person name="Howson R.W."/>
            <person name="Belle A."/>
            <person name="Dephoure N."/>
            <person name="O'Shea E.K."/>
            <person name="Weissman J.S."/>
        </authorList>
    </citation>
    <scope>LEVEL OF PROTEIN EXPRESSION [LARGE SCALE ANALYSIS]</scope>
</reference>
<reference key="6">
    <citation type="journal article" date="2006" name="Genes Dev.">
        <title>Systematic identification and functional screens of uncharacterized proteins associated with eukaryotic ribosomal complexes.</title>
        <authorList>
            <person name="Fleischer T.C."/>
            <person name="Weaver C.M."/>
            <person name="McAfee K.J."/>
            <person name="Jennings J.L."/>
            <person name="Link A.J."/>
        </authorList>
    </citation>
    <scope>ASSOCIATION WITH RIBOSOMAL COMPLEXES</scope>
    <scope>INTERACTION WITH TMA22</scope>
    <scope>IDENTIFICATION BY MASS SPECTROMETRY</scope>
</reference>
<reference key="7">
    <citation type="journal article" date="2012" name="Proc. Natl. Acad. Sci. U.S.A.">
        <title>N-terminal acetylome analyses and functional insights of the N-terminal acetyltransferase NatB.</title>
        <authorList>
            <person name="Van Damme P."/>
            <person name="Lasa M."/>
            <person name="Polevoda B."/>
            <person name="Gazquez C."/>
            <person name="Elosegui-Artola A."/>
            <person name="Kim D.S."/>
            <person name="De Juan-Pardo E."/>
            <person name="Demeyer K."/>
            <person name="Hole K."/>
            <person name="Larrea E."/>
            <person name="Timmerman E."/>
            <person name="Prieto J."/>
            <person name="Arnesen T."/>
            <person name="Sherman F."/>
            <person name="Gevaert K."/>
            <person name="Aldabe R."/>
        </authorList>
    </citation>
    <scope>ACETYLATION [LARGE SCALE ANALYSIS] AT MET-1</scope>
    <scope>IDENTIFICATION BY MASS SPECTROMETRY [LARGE SCALE ANALYSIS]</scope>
</reference>
<dbReference type="EMBL" id="U18778">
    <property type="protein sequence ID" value="AAB64566.1"/>
    <property type="molecule type" value="Genomic_DNA"/>
</dbReference>
<dbReference type="EMBL" id="BK006939">
    <property type="protein sequence ID" value="DAA07658.1"/>
    <property type="molecule type" value="Genomic_DNA"/>
</dbReference>
<dbReference type="PIR" id="S53543">
    <property type="entry name" value="S53543"/>
</dbReference>
<dbReference type="RefSeq" id="NP_010923.3">
    <property type="nucleotide sequence ID" value="NM_001180857.3"/>
</dbReference>
<dbReference type="SMR" id="P89886"/>
<dbReference type="BioGRID" id="36738">
    <property type="interactions" value="72"/>
</dbReference>
<dbReference type="DIP" id="DIP-1841N"/>
<dbReference type="FunCoup" id="P89886">
    <property type="interactions" value="659"/>
</dbReference>
<dbReference type="IntAct" id="P89886">
    <property type="interactions" value="22"/>
</dbReference>
<dbReference type="MINT" id="P89886"/>
<dbReference type="STRING" id="4932.YER007C-A"/>
<dbReference type="iPTMnet" id="P89886"/>
<dbReference type="PaxDb" id="4932-YER007C-A"/>
<dbReference type="PeptideAtlas" id="P89886"/>
<dbReference type="EnsemblFungi" id="YER007C-A_mRNA">
    <property type="protein sequence ID" value="YER007C-A"/>
    <property type="gene ID" value="YER007C-A"/>
</dbReference>
<dbReference type="GeneID" id="856725"/>
<dbReference type="KEGG" id="sce:YER007C-A"/>
<dbReference type="AGR" id="SGD:S000002957"/>
<dbReference type="SGD" id="S000002957">
    <property type="gene designation" value="TMA20"/>
</dbReference>
<dbReference type="VEuPathDB" id="FungiDB:YER007C-A"/>
<dbReference type="eggNOG" id="KOG2523">
    <property type="taxonomic scope" value="Eukaryota"/>
</dbReference>
<dbReference type="GeneTree" id="ENSGT00550000074964"/>
<dbReference type="HOGENOM" id="CLU_090468_0_1_1"/>
<dbReference type="InParanoid" id="P89886"/>
<dbReference type="OMA" id="GVENIHY"/>
<dbReference type="OrthoDB" id="10249667at2759"/>
<dbReference type="BioCyc" id="YEAST:G3O-30353-MONOMER"/>
<dbReference type="BioGRID-ORCS" id="856725">
    <property type="hits" value="7 hits in 10 CRISPR screens"/>
</dbReference>
<dbReference type="PRO" id="PR:P89886"/>
<dbReference type="Proteomes" id="UP000002311">
    <property type="component" value="Chromosome V"/>
</dbReference>
<dbReference type="RNAct" id="P89886">
    <property type="molecule type" value="protein"/>
</dbReference>
<dbReference type="GO" id="GO:0005737">
    <property type="term" value="C:cytoplasm"/>
    <property type="evidence" value="ECO:0007005"/>
    <property type="project" value="SGD"/>
</dbReference>
<dbReference type="GO" id="GO:0005829">
    <property type="term" value="C:cytosol"/>
    <property type="evidence" value="ECO:0000314"/>
    <property type="project" value="SGD"/>
</dbReference>
<dbReference type="GO" id="GO:0003723">
    <property type="term" value="F:RNA binding"/>
    <property type="evidence" value="ECO:0000250"/>
    <property type="project" value="SGD"/>
</dbReference>
<dbReference type="GO" id="GO:0001731">
    <property type="term" value="P:formation of translation preinitiation complex"/>
    <property type="evidence" value="ECO:0000318"/>
    <property type="project" value="GO_Central"/>
</dbReference>
<dbReference type="GO" id="GO:0000184">
    <property type="term" value="P:nuclear-transcribed mRNA catabolic process, nonsense-mediated decay"/>
    <property type="evidence" value="ECO:0000315"/>
    <property type="project" value="SGD"/>
</dbReference>
<dbReference type="GO" id="GO:0042254">
    <property type="term" value="P:ribosome biogenesis"/>
    <property type="evidence" value="ECO:0000315"/>
    <property type="project" value="SGD"/>
</dbReference>
<dbReference type="CDD" id="cd11609">
    <property type="entry name" value="MCT1_N"/>
    <property type="match status" value="1"/>
</dbReference>
<dbReference type="CDD" id="cd21155">
    <property type="entry name" value="PUA_MCTS-1-like"/>
    <property type="match status" value="1"/>
</dbReference>
<dbReference type="FunFam" id="3.10.400.20:FF:000001">
    <property type="entry name" value="Malignant T-cell-amplified sequence 1"/>
    <property type="match status" value="1"/>
</dbReference>
<dbReference type="Gene3D" id="3.10.400.20">
    <property type="match status" value="1"/>
</dbReference>
<dbReference type="InterPro" id="IPR016437">
    <property type="entry name" value="MCT-1/Tma20"/>
</dbReference>
<dbReference type="InterPro" id="IPR041366">
    <property type="entry name" value="Pre-PUA"/>
</dbReference>
<dbReference type="InterPro" id="IPR002478">
    <property type="entry name" value="PUA"/>
</dbReference>
<dbReference type="InterPro" id="IPR015947">
    <property type="entry name" value="PUA-like_sf"/>
</dbReference>
<dbReference type="InterPro" id="IPR004521">
    <property type="entry name" value="Uncharacterised_CHP00451"/>
</dbReference>
<dbReference type="NCBIfam" id="TIGR00451">
    <property type="entry name" value="unchar_dom_2"/>
    <property type="match status" value="1"/>
</dbReference>
<dbReference type="PANTHER" id="PTHR22798:SF0">
    <property type="entry name" value="MALIGNANT T-CELL-AMPLIFIED SEQUENCE 1"/>
    <property type="match status" value="1"/>
</dbReference>
<dbReference type="PANTHER" id="PTHR22798">
    <property type="entry name" value="MCT-1 PROTEIN"/>
    <property type="match status" value="1"/>
</dbReference>
<dbReference type="Pfam" id="PF17832">
    <property type="entry name" value="Pre-PUA"/>
    <property type="match status" value="1"/>
</dbReference>
<dbReference type="Pfam" id="PF01472">
    <property type="entry name" value="PUA"/>
    <property type="match status" value="1"/>
</dbReference>
<dbReference type="PIRSF" id="PIRSF005067">
    <property type="entry name" value="Tma_RNA-bind_prd"/>
    <property type="match status" value="1"/>
</dbReference>
<dbReference type="SMART" id="SM00359">
    <property type="entry name" value="PUA"/>
    <property type="match status" value="1"/>
</dbReference>
<dbReference type="SUPFAM" id="SSF88697">
    <property type="entry name" value="PUA domain-like"/>
    <property type="match status" value="1"/>
</dbReference>
<dbReference type="PROSITE" id="PS50890">
    <property type="entry name" value="PUA"/>
    <property type="match status" value="1"/>
</dbReference>
<feature type="chain" id="PRO_0000245367" description="Translation machinery-associated protein 20">
    <location>
        <begin position="1"/>
        <end position="181"/>
    </location>
</feature>
<feature type="domain" description="PUA" evidence="1">
    <location>
        <begin position="90"/>
        <end position="172"/>
    </location>
</feature>
<feature type="modified residue" description="N-acetylmethionine" evidence="6">
    <location>
        <position position="1"/>
    </location>
</feature>
<accession>P89886</accession>
<accession>D3DLQ4</accession>
<protein>
    <recommendedName>
        <fullName>Translation machinery-associated protein 20</fullName>
    </recommendedName>
</protein>
<gene>
    <name type="primary">TMA20</name>
    <name type="ordered locus">YER007C-A</name>
</gene>
<comment type="function">
    <text>Involved in translation.</text>
</comment>
<comment type="subunit">
    <text evidence="4">Interacts with TMA22. Associates with ribosomal complexes.</text>
</comment>
<comment type="interaction">
    <interactant intactId="EBI-33141">
        <id>P89886</id>
    </interactant>
    <interactant intactId="EBI-5751">
        <id>P47089</id>
        <label>TMA22</label>
    </interactant>
    <organismsDiffer>false</organismsDiffer>
    <experiments>3</experiments>
</comment>
<comment type="subcellular location">
    <subcellularLocation>
        <location evidence="2">Cytoplasm</location>
    </subcellularLocation>
</comment>
<comment type="miscellaneous">
    <text evidence="3">Present with 4220 molecules/cell in log phase SD medium.</text>
</comment>
<comment type="similarity">
    <text evidence="5">Belongs to the TMA20 family.</text>
</comment>
<evidence type="ECO:0000255" key="1">
    <source>
        <dbReference type="PROSITE-ProRule" id="PRU00161"/>
    </source>
</evidence>
<evidence type="ECO:0000269" key="2">
    <source>
    </source>
</evidence>
<evidence type="ECO:0000269" key="3">
    <source>
    </source>
</evidence>
<evidence type="ECO:0000269" key="4">
    <source>
    </source>
</evidence>
<evidence type="ECO:0000305" key="5"/>
<evidence type="ECO:0007744" key="6">
    <source>
    </source>
</evidence>
<keyword id="KW-0007">Acetylation</keyword>
<keyword id="KW-0963">Cytoplasm</keyword>
<keyword id="KW-0648">Protein biosynthesis</keyword>
<keyword id="KW-1185">Reference proteome</keyword>
<keyword id="KW-0694">RNA-binding</keyword>
<proteinExistence type="evidence at protein level"/>
<sequence>MFKKFTREDVHSRSKVKSSIQRTLKAKLVKQYPKIEDVIDELIPKKSQIELIKCEDKIQLYSVDGEVLFFQKFDELIPSLKLVHKFPEAYPTVQVDRGAIKFVLSGANIMCPGLTSAGADLPPAPGYEKGTIVVINAENKENALAIGELMMGTEEIKSVNKGHSIELIHHLGDPLWNFSVE</sequence>